<protein>
    <recommendedName>
        <fullName>Protein phosphatase methylesterase 1</fullName>
        <shortName>PME-1</shortName>
        <ecNumber>3.1.1.89</ecNumber>
    </recommendedName>
</protein>
<sequence>MSALEKSMHLGRLPSRPPLPGSGGSQSGAKMRMGPGRKRDFTPVPWSQYFESMEDVEVENETGKDTFRVYKSGSEGPVLLLLHGGGHSALSWAVFTAAIISRVQCRIVALDLRGHGETKVKNSEDLSAETMAKDVGNVVEAMYGDLPPPVMLIGHSMGGAIAVHTAAANLVPSLLGLCMIDVVEGTAMDALNSMQNFLRGRPKTFKSLENAIEWSVKSGQIRNLESARVSMVGQVKQCEGITSPEGSKSIVEGIIEEEEEDEEGSESVNKRKKEDDMETKKDHPYTWRIELAKTEKYWDGWFRGLSNLFLSCPIPKLLLLAGVDRLDKDLTIGQMQGKFQMQVLPQCGHAVHEDAPDKVAEAVATFLIRHRFAEPIGGFQCVFPGC</sequence>
<dbReference type="EC" id="3.1.1.89"/>
<dbReference type="EMBL" id="AK012256">
    <property type="protein sequence ID" value="BAB28122.1"/>
    <property type="molecule type" value="mRNA"/>
</dbReference>
<dbReference type="EMBL" id="AK146051">
    <property type="protein sequence ID" value="BAE26861.1"/>
    <property type="molecule type" value="mRNA"/>
</dbReference>
<dbReference type="EMBL" id="AK146268">
    <property type="protein sequence ID" value="BAE27027.1"/>
    <property type="molecule type" value="mRNA"/>
</dbReference>
<dbReference type="EMBL" id="AK154876">
    <property type="protein sequence ID" value="BAE32896.1"/>
    <property type="status" value="ALT_INIT"/>
    <property type="molecule type" value="mRNA"/>
</dbReference>
<dbReference type="EMBL" id="BC014867">
    <property type="protein sequence ID" value="AAH14867.1"/>
    <property type="molecule type" value="mRNA"/>
</dbReference>
<dbReference type="EMBL" id="BC029064">
    <property type="protein sequence ID" value="AAH29064.1"/>
    <property type="molecule type" value="mRNA"/>
</dbReference>
<dbReference type="CCDS" id="CCDS40036.1"/>
<dbReference type="RefSeq" id="NP_082568.1">
    <property type="nucleotide sequence ID" value="NM_028292.2"/>
</dbReference>
<dbReference type="SMR" id="Q8BVQ5"/>
<dbReference type="BioGRID" id="215457">
    <property type="interactions" value="27"/>
</dbReference>
<dbReference type="DIP" id="DIP-46211N"/>
<dbReference type="FunCoup" id="Q8BVQ5">
    <property type="interactions" value="4090"/>
</dbReference>
<dbReference type="IntAct" id="Q8BVQ5">
    <property type="interactions" value="3"/>
</dbReference>
<dbReference type="MINT" id="Q8BVQ5"/>
<dbReference type="STRING" id="10090.ENSMUSP00000032963"/>
<dbReference type="BindingDB" id="Q8BVQ5"/>
<dbReference type="ChEMBL" id="CHEMBL2189138"/>
<dbReference type="ESTHER" id="mouse-PPME1">
    <property type="family name" value="PPase_methylesterase_euk"/>
</dbReference>
<dbReference type="GlyGen" id="Q8BVQ5">
    <property type="glycosylation" value="1 site, 1 O-linked glycan (1 site)"/>
</dbReference>
<dbReference type="iPTMnet" id="Q8BVQ5"/>
<dbReference type="PhosphoSitePlus" id="Q8BVQ5"/>
<dbReference type="SwissPalm" id="Q8BVQ5"/>
<dbReference type="jPOST" id="Q8BVQ5"/>
<dbReference type="PaxDb" id="10090-ENSMUSP00000032963"/>
<dbReference type="PeptideAtlas" id="Q8BVQ5"/>
<dbReference type="ProteomicsDB" id="291719"/>
<dbReference type="Pumba" id="Q8BVQ5"/>
<dbReference type="Antibodypedia" id="3870">
    <property type="antibodies" value="337 antibodies from 32 providers"/>
</dbReference>
<dbReference type="DNASU" id="72590"/>
<dbReference type="Ensembl" id="ENSMUST00000032963.10">
    <property type="protein sequence ID" value="ENSMUSP00000032963.9"/>
    <property type="gene ID" value="ENSMUSG00000030718.10"/>
</dbReference>
<dbReference type="GeneID" id="72590"/>
<dbReference type="KEGG" id="mmu:72590"/>
<dbReference type="UCSC" id="uc009imu.1">
    <property type="organism name" value="mouse"/>
</dbReference>
<dbReference type="AGR" id="MGI:1919840"/>
<dbReference type="CTD" id="51400"/>
<dbReference type="MGI" id="MGI:1919840">
    <property type="gene designation" value="Ppme1"/>
</dbReference>
<dbReference type="VEuPathDB" id="HostDB:ENSMUSG00000030718"/>
<dbReference type="eggNOG" id="KOG2564">
    <property type="taxonomic scope" value="Eukaryota"/>
</dbReference>
<dbReference type="GeneTree" id="ENSGT00390000004396"/>
<dbReference type="HOGENOM" id="CLU_024818_0_1_1"/>
<dbReference type="InParanoid" id="Q8BVQ5"/>
<dbReference type="OMA" id="VMVCHHG"/>
<dbReference type="OrthoDB" id="194865at2759"/>
<dbReference type="PhylomeDB" id="Q8BVQ5"/>
<dbReference type="TreeFam" id="TF314697"/>
<dbReference type="BRENDA" id="3.1.1.89">
    <property type="organism ID" value="3474"/>
</dbReference>
<dbReference type="Reactome" id="R-MMU-69273">
    <property type="pathway name" value="Cyclin A/B1/B2 associated events during G2/M transition"/>
</dbReference>
<dbReference type="BioGRID-ORCS" id="72590">
    <property type="hits" value="11 hits in 81 CRISPR screens"/>
</dbReference>
<dbReference type="ChiTaRS" id="Ppme1">
    <property type="organism name" value="mouse"/>
</dbReference>
<dbReference type="PRO" id="PR:Q8BVQ5"/>
<dbReference type="Proteomes" id="UP000000589">
    <property type="component" value="Chromosome 7"/>
</dbReference>
<dbReference type="RNAct" id="Q8BVQ5">
    <property type="molecule type" value="protein"/>
</dbReference>
<dbReference type="Bgee" id="ENSMUSG00000030718">
    <property type="expression patterns" value="Expressed in primary motor cortex and 278 other cell types or tissues"/>
</dbReference>
<dbReference type="ExpressionAtlas" id="Q8BVQ5">
    <property type="expression patterns" value="baseline and differential"/>
</dbReference>
<dbReference type="GO" id="GO:0106222">
    <property type="term" value="F:lncRNA binding"/>
    <property type="evidence" value="ECO:0000314"/>
    <property type="project" value="MGI"/>
</dbReference>
<dbReference type="GO" id="GO:0051722">
    <property type="term" value="F:protein C-terminal methylesterase activity"/>
    <property type="evidence" value="ECO:0000250"/>
    <property type="project" value="HGNC-UCL"/>
</dbReference>
<dbReference type="GO" id="GO:0019901">
    <property type="term" value="F:protein kinase binding"/>
    <property type="evidence" value="ECO:0007669"/>
    <property type="project" value="Ensembl"/>
</dbReference>
<dbReference type="GO" id="GO:0051721">
    <property type="term" value="F:protein phosphatase 2A binding"/>
    <property type="evidence" value="ECO:0000250"/>
    <property type="project" value="HGNC-UCL"/>
</dbReference>
<dbReference type="GO" id="GO:0019903">
    <property type="term" value="F:protein phosphatase binding"/>
    <property type="evidence" value="ECO:0000250"/>
    <property type="project" value="HGNC-UCL"/>
</dbReference>
<dbReference type="GO" id="GO:0004864">
    <property type="term" value="F:protein phosphatase inhibitor activity"/>
    <property type="evidence" value="ECO:0007669"/>
    <property type="project" value="Ensembl"/>
</dbReference>
<dbReference type="Gene3D" id="3.40.50.1820">
    <property type="entry name" value="alpha/beta hydrolase"/>
    <property type="match status" value="1"/>
</dbReference>
<dbReference type="InterPro" id="IPR000073">
    <property type="entry name" value="AB_hydrolase_1"/>
</dbReference>
<dbReference type="InterPro" id="IPR029058">
    <property type="entry name" value="AB_hydrolase_fold"/>
</dbReference>
<dbReference type="InterPro" id="IPR000639">
    <property type="entry name" value="Epox_hydrolase-like"/>
</dbReference>
<dbReference type="InterPro" id="IPR016812">
    <property type="entry name" value="PPase_methylesterase_euk"/>
</dbReference>
<dbReference type="PANTHER" id="PTHR14189:SF0">
    <property type="entry name" value="PROTEIN PHOSPHATASE METHYLESTERASE 1"/>
    <property type="match status" value="1"/>
</dbReference>
<dbReference type="PANTHER" id="PTHR14189">
    <property type="entry name" value="PROTEIN PHOSPHATASE METHYLESTERASE-1 RELATED"/>
    <property type="match status" value="1"/>
</dbReference>
<dbReference type="Pfam" id="PF12697">
    <property type="entry name" value="Abhydrolase_6"/>
    <property type="match status" value="1"/>
</dbReference>
<dbReference type="PIRSF" id="PIRSF022950">
    <property type="entry name" value="PPase_methylesterase_euk"/>
    <property type="match status" value="1"/>
</dbReference>
<dbReference type="PRINTS" id="PR00111">
    <property type="entry name" value="ABHYDROLASE"/>
</dbReference>
<dbReference type="PRINTS" id="PR00412">
    <property type="entry name" value="EPOXHYDRLASE"/>
</dbReference>
<dbReference type="SUPFAM" id="SSF53474">
    <property type="entry name" value="alpha/beta-Hydrolases"/>
    <property type="match status" value="1"/>
</dbReference>
<dbReference type="PROSITE" id="PS00120">
    <property type="entry name" value="LIPASE_SER"/>
    <property type="match status" value="1"/>
</dbReference>
<gene>
    <name type="primary">Ppme1</name>
    <name type="synonym">Pme1</name>
</gene>
<feature type="chain" id="PRO_0000090391" description="Protein phosphatase methylesterase 1">
    <location>
        <begin position="1"/>
        <end position="386"/>
    </location>
</feature>
<feature type="region of interest" description="Disordered" evidence="3">
    <location>
        <begin position="1"/>
        <end position="38"/>
    </location>
</feature>
<feature type="region of interest" description="Disordered" evidence="3">
    <location>
        <begin position="255"/>
        <end position="280"/>
    </location>
</feature>
<feature type="compositionally biased region" description="Acidic residues" evidence="3">
    <location>
        <begin position="255"/>
        <end position="265"/>
    </location>
</feature>
<feature type="compositionally biased region" description="Basic and acidic residues" evidence="3">
    <location>
        <begin position="268"/>
        <end position="280"/>
    </location>
</feature>
<feature type="active site" evidence="1">
    <location>
        <position position="156"/>
    </location>
</feature>
<feature type="active site" evidence="1">
    <location>
        <position position="181"/>
    </location>
</feature>
<feature type="active site" evidence="1">
    <location>
        <position position="349"/>
    </location>
</feature>
<feature type="modified residue" description="Phosphoserine" evidence="2">
    <location>
        <position position="15"/>
    </location>
</feature>
<feature type="modified residue" description="Asymmetric dimethylarginine; alternate" evidence="6">
    <location>
        <position position="16"/>
    </location>
</feature>
<feature type="modified residue" description="Omega-N-methylarginine; alternate" evidence="2">
    <location>
        <position position="16"/>
    </location>
</feature>
<feature type="sequence conflict" description="In Ref. 1; BAE27027." evidence="5" ref="1">
    <original>P</original>
    <variation>T</variation>
    <location>
        <position position="17"/>
    </location>
</feature>
<feature type="sequence conflict" description="In Ref. 2; AAH29064." evidence="5" ref="2">
    <original>G</original>
    <variation>D</variation>
    <location>
        <position position="86"/>
    </location>
</feature>
<feature type="sequence conflict" description="In Ref. 1; BAE27027." evidence="5" ref="1">
    <original>H</original>
    <variation>R</variation>
    <location>
        <position position="370"/>
    </location>
</feature>
<name>PPME1_MOUSE</name>
<evidence type="ECO:0000250" key="1"/>
<evidence type="ECO:0000250" key="2">
    <source>
        <dbReference type="UniProtKB" id="Q9Y570"/>
    </source>
</evidence>
<evidence type="ECO:0000256" key="3">
    <source>
        <dbReference type="SAM" id="MobiDB-lite"/>
    </source>
</evidence>
<evidence type="ECO:0000269" key="4">
    <source>
    </source>
</evidence>
<evidence type="ECO:0000305" key="5"/>
<evidence type="ECO:0007744" key="6">
    <source>
    </source>
</evidence>
<keyword id="KW-0903">Direct protein sequencing</keyword>
<keyword id="KW-0378">Hydrolase</keyword>
<keyword id="KW-0488">Methylation</keyword>
<keyword id="KW-0597">Phosphoprotein</keyword>
<keyword id="KW-1185">Reference proteome</keyword>
<keyword id="KW-0719">Serine esterase</keyword>
<proteinExistence type="evidence at protein level"/>
<reference key="1">
    <citation type="journal article" date="2005" name="Science">
        <title>The transcriptional landscape of the mammalian genome.</title>
        <authorList>
            <person name="Carninci P."/>
            <person name="Kasukawa T."/>
            <person name="Katayama S."/>
            <person name="Gough J."/>
            <person name="Frith M.C."/>
            <person name="Maeda N."/>
            <person name="Oyama R."/>
            <person name="Ravasi T."/>
            <person name="Lenhard B."/>
            <person name="Wells C."/>
            <person name="Kodzius R."/>
            <person name="Shimokawa K."/>
            <person name="Bajic V.B."/>
            <person name="Brenner S.E."/>
            <person name="Batalov S."/>
            <person name="Forrest A.R."/>
            <person name="Zavolan M."/>
            <person name="Davis M.J."/>
            <person name="Wilming L.G."/>
            <person name="Aidinis V."/>
            <person name="Allen J.E."/>
            <person name="Ambesi-Impiombato A."/>
            <person name="Apweiler R."/>
            <person name="Aturaliya R.N."/>
            <person name="Bailey T.L."/>
            <person name="Bansal M."/>
            <person name="Baxter L."/>
            <person name="Beisel K.W."/>
            <person name="Bersano T."/>
            <person name="Bono H."/>
            <person name="Chalk A.M."/>
            <person name="Chiu K.P."/>
            <person name="Choudhary V."/>
            <person name="Christoffels A."/>
            <person name="Clutterbuck D.R."/>
            <person name="Crowe M.L."/>
            <person name="Dalla E."/>
            <person name="Dalrymple B.P."/>
            <person name="de Bono B."/>
            <person name="Della Gatta G."/>
            <person name="di Bernardo D."/>
            <person name="Down T."/>
            <person name="Engstrom P."/>
            <person name="Fagiolini M."/>
            <person name="Faulkner G."/>
            <person name="Fletcher C.F."/>
            <person name="Fukushima T."/>
            <person name="Furuno M."/>
            <person name="Futaki S."/>
            <person name="Gariboldi M."/>
            <person name="Georgii-Hemming P."/>
            <person name="Gingeras T.R."/>
            <person name="Gojobori T."/>
            <person name="Green R.E."/>
            <person name="Gustincich S."/>
            <person name="Harbers M."/>
            <person name="Hayashi Y."/>
            <person name="Hensch T.K."/>
            <person name="Hirokawa N."/>
            <person name="Hill D."/>
            <person name="Huminiecki L."/>
            <person name="Iacono M."/>
            <person name="Ikeo K."/>
            <person name="Iwama A."/>
            <person name="Ishikawa T."/>
            <person name="Jakt M."/>
            <person name="Kanapin A."/>
            <person name="Katoh M."/>
            <person name="Kawasawa Y."/>
            <person name="Kelso J."/>
            <person name="Kitamura H."/>
            <person name="Kitano H."/>
            <person name="Kollias G."/>
            <person name="Krishnan S.P."/>
            <person name="Kruger A."/>
            <person name="Kummerfeld S.K."/>
            <person name="Kurochkin I.V."/>
            <person name="Lareau L.F."/>
            <person name="Lazarevic D."/>
            <person name="Lipovich L."/>
            <person name="Liu J."/>
            <person name="Liuni S."/>
            <person name="McWilliam S."/>
            <person name="Madan Babu M."/>
            <person name="Madera M."/>
            <person name="Marchionni L."/>
            <person name="Matsuda H."/>
            <person name="Matsuzawa S."/>
            <person name="Miki H."/>
            <person name="Mignone F."/>
            <person name="Miyake S."/>
            <person name="Morris K."/>
            <person name="Mottagui-Tabar S."/>
            <person name="Mulder N."/>
            <person name="Nakano N."/>
            <person name="Nakauchi H."/>
            <person name="Ng P."/>
            <person name="Nilsson R."/>
            <person name="Nishiguchi S."/>
            <person name="Nishikawa S."/>
            <person name="Nori F."/>
            <person name="Ohara O."/>
            <person name="Okazaki Y."/>
            <person name="Orlando V."/>
            <person name="Pang K.C."/>
            <person name="Pavan W.J."/>
            <person name="Pavesi G."/>
            <person name="Pesole G."/>
            <person name="Petrovsky N."/>
            <person name="Piazza S."/>
            <person name="Reed J."/>
            <person name="Reid J.F."/>
            <person name="Ring B.Z."/>
            <person name="Ringwald M."/>
            <person name="Rost B."/>
            <person name="Ruan Y."/>
            <person name="Salzberg S.L."/>
            <person name="Sandelin A."/>
            <person name="Schneider C."/>
            <person name="Schoenbach C."/>
            <person name="Sekiguchi K."/>
            <person name="Semple C.A."/>
            <person name="Seno S."/>
            <person name="Sessa L."/>
            <person name="Sheng Y."/>
            <person name="Shibata Y."/>
            <person name="Shimada H."/>
            <person name="Shimada K."/>
            <person name="Silva D."/>
            <person name="Sinclair B."/>
            <person name="Sperling S."/>
            <person name="Stupka E."/>
            <person name="Sugiura K."/>
            <person name="Sultana R."/>
            <person name="Takenaka Y."/>
            <person name="Taki K."/>
            <person name="Tammoja K."/>
            <person name="Tan S.L."/>
            <person name="Tang S."/>
            <person name="Taylor M.S."/>
            <person name="Tegner J."/>
            <person name="Teichmann S.A."/>
            <person name="Ueda H.R."/>
            <person name="van Nimwegen E."/>
            <person name="Verardo R."/>
            <person name="Wei C.L."/>
            <person name="Yagi K."/>
            <person name="Yamanishi H."/>
            <person name="Zabarovsky E."/>
            <person name="Zhu S."/>
            <person name="Zimmer A."/>
            <person name="Hide W."/>
            <person name="Bult C."/>
            <person name="Grimmond S.M."/>
            <person name="Teasdale R.D."/>
            <person name="Liu E.T."/>
            <person name="Brusic V."/>
            <person name="Quackenbush J."/>
            <person name="Wahlestedt C."/>
            <person name="Mattick J.S."/>
            <person name="Hume D.A."/>
            <person name="Kai C."/>
            <person name="Sasaki D."/>
            <person name="Tomaru Y."/>
            <person name="Fukuda S."/>
            <person name="Kanamori-Katayama M."/>
            <person name="Suzuki M."/>
            <person name="Aoki J."/>
            <person name="Arakawa T."/>
            <person name="Iida J."/>
            <person name="Imamura K."/>
            <person name="Itoh M."/>
            <person name="Kato T."/>
            <person name="Kawaji H."/>
            <person name="Kawagashira N."/>
            <person name="Kawashima T."/>
            <person name="Kojima M."/>
            <person name="Kondo S."/>
            <person name="Konno H."/>
            <person name="Nakano K."/>
            <person name="Ninomiya N."/>
            <person name="Nishio T."/>
            <person name="Okada M."/>
            <person name="Plessy C."/>
            <person name="Shibata K."/>
            <person name="Shiraki T."/>
            <person name="Suzuki S."/>
            <person name="Tagami M."/>
            <person name="Waki K."/>
            <person name="Watahiki A."/>
            <person name="Okamura-Oho Y."/>
            <person name="Suzuki H."/>
            <person name="Kawai J."/>
            <person name="Hayashizaki Y."/>
        </authorList>
    </citation>
    <scope>NUCLEOTIDE SEQUENCE [LARGE SCALE MRNA]</scope>
    <source>
        <strain>C57BL/6J</strain>
        <strain>NOD</strain>
        <tissue>Dendritic cell</tissue>
        <tissue>Embryo</tissue>
        <tissue>Placenta</tissue>
    </source>
</reference>
<reference key="2">
    <citation type="journal article" date="2004" name="Genome Res.">
        <title>The status, quality, and expansion of the NIH full-length cDNA project: the Mammalian Gene Collection (MGC).</title>
        <authorList>
            <consortium name="The MGC Project Team"/>
        </authorList>
    </citation>
    <scope>NUCLEOTIDE SEQUENCE [LARGE SCALE MRNA]</scope>
    <source>
        <strain>FVB/N</strain>
        <tissue>Mammary gland</tissue>
    </source>
</reference>
<reference key="3">
    <citation type="journal article" date="1999" name="J. Biol. Chem.">
        <title>A protein phosphatase methylesterase (PME-1) is one of several novel proteins stably associating with two inactive mutants of protein phosphatase 2A.</title>
        <authorList>
            <person name="Ogris E."/>
            <person name="Du X."/>
            <person name="Nelson K.C."/>
            <person name="Mak E.K."/>
            <person name="Yu X.X."/>
            <person name="Lane W.S."/>
            <person name="Pallas D.C."/>
        </authorList>
    </citation>
    <scope>PARTIAL PROTEIN SEQUENCE</scope>
    <scope>TISSUE SPECIFICITY</scope>
</reference>
<reference key="4">
    <citation type="journal article" date="2010" name="Cell">
        <title>A tissue-specific atlas of mouse protein phosphorylation and expression.</title>
        <authorList>
            <person name="Huttlin E.L."/>
            <person name="Jedrychowski M.P."/>
            <person name="Elias J.E."/>
            <person name="Goswami T."/>
            <person name="Rad R."/>
            <person name="Beausoleil S.A."/>
            <person name="Villen J."/>
            <person name="Haas W."/>
            <person name="Sowa M.E."/>
            <person name="Gygi S.P."/>
        </authorList>
    </citation>
    <scope>IDENTIFICATION BY MASS SPECTROMETRY [LARGE SCALE ANALYSIS]</scope>
    <source>
        <tissue>Brain</tissue>
        <tissue>Brown adipose tissue</tissue>
        <tissue>Heart</tissue>
        <tissue>Kidney</tissue>
        <tissue>Liver</tissue>
        <tissue>Lung</tissue>
        <tissue>Pancreas</tissue>
        <tissue>Spleen</tissue>
        <tissue>Testis</tissue>
    </source>
</reference>
<reference key="5">
    <citation type="journal article" date="2014" name="Mol. Cell. Proteomics">
        <title>Immunoaffinity enrichment and mass spectrometry analysis of protein methylation.</title>
        <authorList>
            <person name="Guo A."/>
            <person name="Gu H."/>
            <person name="Zhou J."/>
            <person name="Mulhern D."/>
            <person name="Wang Y."/>
            <person name="Lee K.A."/>
            <person name="Yang V."/>
            <person name="Aguiar M."/>
            <person name="Kornhauser J."/>
            <person name="Jia X."/>
            <person name="Ren J."/>
            <person name="Beausoleil S.A."/>
            <person name="Silva J.C."/>
            <person name="Vemulapalli V."/>
            <person name="Bedford M.T."/>
            <person name="Comb M.J."/>
        </authorList>
    </citation>
    <scope>METHYLATION [LARGE SCALE ANALYSIS] AT ARG-16</scope>
    <scope>IDENTIFICATION BY MASS SPECTROMETRY [LARGE SCALE ANALYSIS]</scope>
    <source>
        <tissue>Brain</tissue>
    </source>
</reference>
<accession>Q8BVQ5</accession>
<accession>Q3U392</accession>
<accession>Q3UJX8</accession>
<accession>Q3UKE0</accession>
<accession>Q8K311</accession>
<accession>Q91YR8</accession>
<accession>Q9CSP7</accession>
<organism>
    <name type="scientific">Mus musculus</name>
    <name type="common">Mouse</name>
    <dbReference type="NCBI Taxonomy" id="10090"/>
    <lineage>
        <taxon>Eukaryota</taxon>
        <taxon>Metazoa</taxon>
        <taxon>Chordata</taxon>
        <taxon>Craniata</taxon>
        <taxon>Vertebrata</taxon>
        <taxon>Euteleostomi</taxon>
        <taxon>Mammalia</taxon>
        <taxon>Eutheria</taxon>
        <taxon>Euarchontoglires</taxon>
        <taxon>Glires</taxon>
        <taxon>Rodentia</taxon>
        <taxon>Myomorpha</taxon>
        <taxon>Muroidea</taxon>
        <taxon>Muridae</taxon>
        <taxon>Murinae</taxon>
        <taxon>Mus</taxon>
        <taxon>Mus</taxon>
    </lineage>
</organism>
<comment type="function">
    <text evidence="1">Demethylates proteins that have been reversibly carboxymethylated. Demethylates PPP2CB (in vitro) and PPP2CA. Binding to PPP2CA displaces the manganese ion and inactivates the enzyme (By similarity).</text>
</comment>
<comment type="catalytic activity">
    <reaction>
        <text>[phosphatase 2A protein]-C-terminal L-leucine methyl ester + H2O = [phosphatase 2A protein]-C-terminal L-leucine + methanol + H(+)</text>
        <dbReference type="Rhea" id="RHEA:48548"/>
        <dbReference type="Rhea" id="RHEA-COMP:12134"/>
        <dbReference type="Rhea" id="RHEA-COMP:12135"/>
        <dbReference type="ChEBI" id="CHEBI:15377"/>
        <dbReference type="ChEBI" id="CHEBI:15378"/>
        <dbReference type="ChEBI" id="CHEBI:17790"/>
        <dbReference type="ChEBI" id="CHEBI:90516"/>
        <dbReference type="ChEBI" id="CHEBI:90517"/>
        <dbReference type="EC" id="3.1.1.89"/>
    </reaction>
</comment>
<comment type="subunit">
    <text evidence="1">Binds PPP2CA and PPP2CB.</text>
</comment>
<comment type="tissue specificity">
    <text evidence="4">Ubiquitous. Highly expressed in testis and brain.</text>
</comment>
<comment type="PTM">
    <text evidence="1">Phosphorylated by SIK1 following increases in intracellular sodium, leading to dissociation from the protein phosphatase 2A (PP2A) complex and subsequent dephosphorylation of sodium/potassium-transporting ATPase ATP1A1.</text>
</comment>
<comment type="similarity">
    <text evidence="5">Belongs to the AB hydrolase superfamily.</text>
</comment>
<comment type="sequence caution" evidence="5">
    <conflict type="erroneous initiation">
        <sequence resource="EMBL-CDS" id="BAE32896"/>
    </conflict>
</comment>